<dbReference type="EMBL" id="AY370634">
    <property type="protein sequence ID" value="AAQ72534.1"/>
    <property type="molecule type" value="mRNA"/>
</dbReference>
<dbReference type="CCDS" id="CCDS21128.1"/>
<dbReference type="SMR" id="Q6UGQ3"/>
<dbReference type="STRING" id="10090.ENSMUSP00000048540"/>
<dbReference type="PaxDb" id="10090-ENSMUSP00000048540"/>
<dbReference type="ProteomicsDB" id="256977"/>
<dbReference type="AGR" id="MGI:3042579"/>
<dbReference type="MGI" id="MGI:3042579">
    <property type="gene designation" value="Scgb2b2"/>
</dbReference>
<dbReference type="eggNOG" id="ENOG502RU0W">
    <property type="taxonomic scope" value="Eukaryota"/>
</dbReference>
<dbReference type="InParanoid" id="Q6UGQ3"/>
<dbReference type="OrthoDB" id="9591489at2759"/>
<dbReference type="PhylomeDB" id="Q6UGQ3"/>
<dbReference type="PRO" id="PR:Q6UGQ3"/>
<dbReference type="Proteomes" id="UP000000589">
    <property type="component" value="Unplaced"/>
</dbReference>
<dbReference type="RNAct" id="Q6UGQ3">
    <property type="molecule type" value="protein"/>
</dbReference>
<dbReference type="GO" id="GO:0005615">
    <property type="term" value="C:extracellular space"/>
    <property type="evidence" value="ECO:0007669"/>
    <property type="project" value="InterPro"/>
</dbReference>
<dbReference type="CDD" id="cd00633">
    <property type="entry name" value="Secretoglobin"/>
    <property type="match status" value="1"/>
</dbReference>
<dbReference type="Gene3D" id="1.20.920.50">
    <property type="match status" value="1"/>
</dbReference>
<dbReference type="InterPro" id="IPR015332">
    <property type="entry name" value="CH2-like"/>
</dbReference>
<dbReference type="InterPro" id="IPR016126">
    <property type="entry name" value="Secretoglobin"/>
</dbReference>
<dbReference type="InterPro" id="IPR053723">
    <property type="entry name" value="Secretoglobin_Domain_sf"/>
</dbReference>
<dbReference type="InterPro" id="IPR035960">
    <property type="entry name" value="Secretoglobin_sf"/>
</dbReference>
<dbReference type="PANTHER" id="PTHR31708">
    <property type="entry name" value="ABPBG26-RELATED"/>
    <property type="match status" value="1"/>
</dbReference>
<dbReference type="PANTHER" id="PTHR31708:SF2">
    <property type="entry name" value="SECRETOGLOBIN FAMILY 2B MEMBER 2"/>
    <property type="match status" value="1"/>
</dbReference>
<dbReference type="Pfam" id="PF09252">
    <property type="entry name" value="Feld-I_B"/>
    <property type="match status" value="1"/>
</dbReference>
<dbReference type="SUPFAM" id="SSF48201">
    <property type="entry name" value="Uteroglobin-like"/>
    <property type="match status" value="1"/>
</dbReference>
<dbReference type="PROSITE" id="PS51311">
    <property type="entry name" value="SCGB"/>
    <property type="match status" value="1"/>
</dbReference>
<name>SG2B2_MOUSE</name>
<accession>Q6UGQ3</accession>
<keyword id="KW-1185">Reference proteome</keyword>
<keyword id="KW-0964">Secreted</keyword>
<keyword id="KW-0732">Signal</keyword>
<reference key="1">
    <citation type="journal article" date="2005" name="Invest. Ophthalmol. Vis. Sci.">
        <title>Secretoglobins: sexually dimorphic expression of androgen-binding protein mRNA in mouse lacrimal glands.</title>
        <authorList>
            <person name="Remington S.G."/>
            <person name="Nelson J.D."/>
        </authorList>
    </citation>
    <scope>NUCLEOTIDE SEQUENCE [MRNA]</scope>
    <scope>TISSUE SPECIFICITY</scope>
    <source>
        <strain>Swiss Webster</strain>
        <tissue>Lacrimal gland</tissue>
    </source>
</reference>
<sequence>MKGTLLLLALLVTGELGFQRTEACIPFFGVYLGILSGNRIGLHTELAPFDPTVEEKEAFEKIQDCYEEEGLKAKTEDMKLMTTILFSSECRSYYTKEVLKNILVKFSKKLTHGS</sequence>
<protein>
    <recommendedName>
        <fullName>Secretoglobin family 2B member 2</fullName>
    </recommendedName>
    <alternativeName>
        <fullName>Androgen-binding protein epsilon</fullName>
    </alternativeName>
    <alternativeName>
        <fullName>Lacrimal androgen-binding protein epsilon</fullName>
    </alternativeName>
</protein>
<comment type="subcellular location">
    <subcellularLocation>
        <location evidence="3">Secreted</location>
    </subcellularLocation>
</comment>
<comment type="tissue specificity">
    <text evidence="2">Expressed in lacrimal gland.</text>
</comment>
<comment type="similarity">
    <text evidence="3">Belongs to the secretoglobin family.</text>
</comment>
<gene>
    <name type="primary">Scgb2b2</name>
    <name type="synonym">Abpe</name>
</gene>
<proteinExistence type="evidence at transcript level"/>
<organism>
    <name type="scientific">Mus musculus</name>
    <name type="common">Mouse</name>
    <dbReference type="NCBI Taxonomy" id="10090"/>
    <lineage>
        <taxon>Eukaryota</taxon>
        <taxon>Metazoa</taxon>
        <taxon>Chordata</taxon>
        <taxon>Craniata</taxon>
        <taxon>Vertebrata</taxon>
        <taxon>Euteleostomi</taxon>
        <taxon>Mammalia</taxon>
        <taxon>Eutheria</taxon>
        <taxon>Euarchontoglires</taxon>
        <taxon>Glires</taxon>
        <taxon>Rodentia</taxon>
        <taxon>Myomorpha</taxon>
        <taxon>Muroidea</taxon>
        <taxon>Muridae</taxon>
        <taxon>Murinae</taxon>
        <taxon>Mus</taxon>
        <taxon>Mus</taxon>
    </lineage>
</organism>
<feature type="signal peptide" evidence="1">
    <location>
        <begin position="1"/>
        <end position="23"/>
    </location>
</feature>
<feature type="chain" id="PRO_0000342375" description="Secretoglobin family 2B member 2">
    <location>
        <begin position="24"/>
        <end position="114"/>
    </location>
</feature>
<evidence type="ECO:0000255" key="1"/>
<evidence type="ECO:0000269" key="2">
    <source>
    </source>
</evidence>
<evidence type="ECO:0000305" key="3"/>